<sequence>MASSQGKNELKFADWMATLPESIHSIPLTNLAIPGSHDSFSFYIDEASPVGPEQPETVQNFVSVFGTVAKKLMRKWLATQTMSFTGQLGAGIRYFDLRISTKPRDPDNELYFAHGLFSAKVNEGLEEINAFLTDHHKEVVFLDFNHFYGMQKYHHEKLVQMLKNIYGNKMCPAIFAQEVSLKYLWEKDYQVLVFYHSPVALEVPFLWPGQMMPAPWANTTDPEKLIQFLQASITERRKKGSFFISQVVLTPKASTVVKGVASGLRETITERALPAMMQWIRTQKPGESGINIVTADFVELGDFISTVIKLNYVFNEGEANT</sequence>
<organism>
    <name type="scientific">Mus musculus</name>
    <name type="common">Mouse</name>
    <dbReference type="NCBI Taxonomy" id="10090"/>
    <lineage>
        <taxon>Eukaryota</taxon>
        <taxon>Metazoa</taxon>
        <taxon>Chordata</taxon>
        <taxon>Craniata</taxon>
        <taxon>Vertebrata</taxon>
        <taxon>Euteleostomi</taxon>
        <taxon>Mammalia</taxon>
        <taxon>Eutheria</taxon>
        <taxon>Euarchontoglires</taxon>
        <taxon>Glires</taxon>
        <taxon>Rodentia</taxon>
        <taxon>Myomorpha</taxon>
        <taxon>Muroidea</taxon>
        <taxon>Muridae</taxon>
        <taxon>Murinae</taxon>
        <taxon>Mus</taxon>
        <taxon>Mus</taxon>
    </lineage>
</organism>
<dbReference type="EMBL" id="AK038575">
    <property type="protein sequence ID" value="BAC30052.1"/>
    <property type="molecule type" value="mRNA"/>
</dbReference>
<dbReference type="EMBL" id="AK044972">
    <property type="protein sequence ID" value="BAC32164.1"/>
    <property type="molecule type" value="mRNA"/>
</dbReference>
<dbReference type="CCDS" id="CCDS27362.2"/>
<dbReference type="RefSeq" id="NP_796329.2">
    <property type="nucleotide sequence ID" value="NM_177355.3"/>
</dbReference>
<dbReference type="SMR" id="Q8BLJ3"/>
<dbReference type="FunCoup" id="Q8BLJ3">
    <property type="interactions" value="54"/>
</dbReference>
<dbReference type="STRING" id="10090.ENSMUSP00000053553"/>
<dbReference type="iPTMnet" id="Q8BLJ3"/>
<dbReference type="PhosphoSitePlus" id="Q8BLJ3"/>
<dbReference type="SwissPalm" id="Q8BLJ3"/>
<dbReference type="PaxDb" id="10090-ENSMUSP00000053553"/>
<dbReference type="ProteomicsDB" id="289541"/>
<dbReference type="GeneID" id="239318"/>
<dbReference type="KEGG" id="mmu:239318"/>
<dbReference type="AGR" id="MGI:2442605"/>
<dbReference type="CTD" id="345557"/>
<dbReference type="MGI" id="MGI:2442605">
    <property type="gene designation" value="Plcxd3"/>
</dbReference>
<dbReference type="eggNOG" id="KOG4306">
    <property type="taxonomic scope" value="Eukaryota"/>
</dbReference>
<dbReference type="InParanoid" id="Q8BLJ3"/>
<dbReference type="OrthoDB" id="1046782at2759"/>
<dbReference type="PhylomeDB" id="Q8BLJ3"/>
<dbReference type="BioGRID-ORCS" id="239318">
    <property type="hits" value="1 hit in 79 CRISPR screens"/>
</dbReference>
<dbReference type="ChiTaRS" id="Plcxd3">
    <property type="organism name" value="mouse"/>
</dbReference>
<dbReference type="PRO" id="PR:Q8BLJ3"/>
<dbReference type="Proteomes" id="UP000000589">
    <property type="component" value="Unplaced"/>
</dbReference>
<dbReference type="RNAct" id="Q8BLJ3">
    <property type="molecule type" value="protein"/>
</dbReference>
<dbReference type="GO" id="GO:0005737">
    <property type="term" value="C:cytoplasm"/>
    <property type="evidence" value="ECO:0007669"/>
    <property type="project" value="UniProtKB-SubCell"/>
</dbReference>
<dbReference type="GO" id="GO:0098978">
    <property type="term" value="C:glutamatergic synapse"/>
    <property type="evidence" value="ECO:0000314"/>
    <property type="project" value="SynGO"/>
</dbReference>
<dbReference type="GO" id="GO:0045202">
    <property type="term" value="C:synapse"/>
    <property type="evidence" value="ECO:0000314"/>
    <property type="project" value="SynGO"/>
</dbReference>
<dbReference type="GO" id="GO:0008081">
    <property type="term" value="F:phosphoric diester hydrolase activity"/>
    <property type="evidence" value="ECO:0007669"/>
    <property type="project" value="InterPro"/>
</dbReference>
<dbReference type="GO" id="GO:0016042">
    <property type="term" value="P:lipid catabolic process"/>
    <property type="evidence" value="ECO:0007669"/>
    <property type="project" value="UniProtKB-KW"/>
</dbReference>
<dbReference type="GO" id="GO:0007165">
    <property type="term" value="P:signal transduction"/>
    <property type="evidence" value="ECO:0007669"/>
    <property type="project" value="UniProtKB-KW"/>
</dbReference>
<dbReference type="CDD" id="cd08616">
    <property type="entry name" value="PI-PLCXD1c"/>
    <property type="match status" value="1"/>
</dbReference>
<dbReference type="FunFam" id="3.20.20.190:FF:000021">
    <property type="entry name" value="PI-PLC X domain-containing protein 3"/>
    <property type="match status" value="1"/>
</dbReference>
<dbReference type="Gene3D" id="3.20.20.190">
    <property type="entry name" value="Phosphatidylinositol (PI) phosphodiesterase"/>
    <property type="match status" value="1"/>
</dbReference>
<dbReference type="InterPro" id="IPR051057">
    <property type="entry name" value="PI-PLC_domain"/>
</dbReference>
<dbReference type="InterPro" id="IPR017946">
    <property type="entry name" value="PLC-like_Pdiesterase_TIM-brl"/>
</dbReference>
<dbReference type="InterPro" id="IPR042158">
    <property type="entry name" value="PLCXD1/2/3"/>
</dbReference>
<dbReference type="InterPro" id="IPR000909">
    <property type="entry name" value="PLipase_C_PInositol-sp_X_dom"/>
</dbReference>
<dbReference type="PANTHER" id="PTHR13593">
    <property type="match status" value="1"/>
</dbReference>
<dbReference type="PANTHER" id="PTHR13593:SF33">
    <property type="entry name" value="PI-PLC X DOMAIN-CONTAINING PROTEIN 3"/>
    <property type="match status" value="1"/>
</dbReference>
<dbReference type="Pfam" id="PF00388">
    <property type="entry name" value="PI-PLC-X"/>
    <property type="match status" value="1"/>
</dbReference>
<dbReference type="SMART" id="SM00148">
    <property type="entry name" value="PLCXc"/>
    <property type="match status" value="1"/>
</dbReference>
<dbReference type="SUPFAM" id="SSF51695">
    <property type="entry name" value="PLC-like phosphodiesterases"/>
    <property type="match status" value="1"/>
</dbReference>
<dbReference type="PROSITE" id="PS50007">
    <property type="entry name" value="PIPLC_X_DOMAIN"/>
    <property type="match status" value="1"/>
</dbReference>
<proteinExistence type="evidence at protein level"/>
<accession>Q8BLJ3</accession>
<accession>Q8BYR3</accession>
<gene>
    <name type="primary">Plcxd3</name>
</gene>
<protein>
    <recommendedName>
        <fullName>PI-PLC X domain-containing protein 3</fullName>
    </recommendedName>
</protein>
<keyword id="KW-0963">Cytoplasm</keyword>
<keyword id="KW-0378">Hydrolase</keyword>
<keyword id="KW-0442">Lipid degradation</keyword>
<keyword id="KW-0443">Lipid metabolism</keyword>
<keyword id="KW-1185">Reference proteome</keyword>
<keyword id="KW-0807">Transducer</keyword>
<name>PLCX3_MOUSE</name>
<feature type="chain" id="PRO_0000305694" description="PI-PLC X domain-containing protein 3">
    <location>
        <begin position="1"/>
        <end position="321"/>
    </location>
</feature>
<feature type="domain" description="PI-PLC X-box" evidence="2">
    <location>
        <begin position="22"/>
        <end position="197"/>
    </location>
</feature>
<feature type="active site" evidence="2">
    <location>
        <position position="37"/>
    </location>
</feature>
<feature type="active site" evidence="2">
    <location>
        <position position="114"/>
    </location>
</feature>
<feature type="sequence conflict" description="In Ref. 1; BAC30052." evidence="4" ref="1">
    <original>N</original>
    <variation>D</variation>
    <location>
        <position position="164"/>
    </location>
</feature>
<comment type="subcellular location">
    <subcellularLocation>
        <location evidence="1">Cytoplasm</location>
    </subcellularLocation>
</comment>
<comment type="tissue specificity">
    <text evidence="3">Widely expressed, with highest levels in brain, followed by heart atrium. Not detected in small intestine, nor stomach.</text>
</comment>
<evidence type="ECO:0000250" key="1">
    <source>
        <dbReference type="UniProtKB" id="Q63HM9"/>
    </source>
</evidence>
<evidence type="ECO:0000255" key="2">
    <source>
        <dbReference type="PROSITE-ProRule" id="PRU00270"/>
    </source>
</evidence>
<evidence type="ECO:0000269" key="3">
    <source>
    </source>
</evidence>
<evidence type="ECO:0000305" key="4"/>
<reference key="1">
    <citation type="journal article" date="2005" name="Science">
        <title>The transcriptional landscape of the mammalian genome.</title>
        <authorList>
            <person name="Carninci P."/>
            <person name="Kasukawa T."/>
            <person name="Katayama S."/>
            <person name="Gough J."/>
            <person name="Frith M.C."/>
            <person name="Maeda N."/>
            <person name="Oyama R."/>
            <person name="Ravasi T."/>
            <person name="Lenhard B."/>
            <person name="Wells C."/>
            <person name="Kodzius R."/>
            <person name="Shimokawa K."/>
            <person name="Bajic V.B."/>
            <person name="Brenner S.E."/>
            <person name="Batalov S."/>
            <person name="Forrest A.R."/>
            <person name="Zavolan M."/>
            <person name="Davis M.J."/>
            <person name="Wilming L.G."/>
            <person name="Aidinis V."/>
            <person name="Allen J.E."/>
            <person name="Ambesi-Impiombato A."/>
            <person name="Apweiler R."/>
            <person name="Aturaliya R.N."/>
            <person name="Bailey T.L."/>
            <person name="Bansal M."/>
            <person name="Baxter L."/>
            <person name="Beisel K.W."/>
            <person name="Bersano T."/>
            <person name="Bono H."/>
            <person name="Chalk A.M."/>
            <person name="Chiu K.P."/>
            <person name="Choudhary V."/>
            <person name="Christoffels A."/>
            <person name="Clutterbuck D.R."/>
            <person name="Crowe M.L."/>
            <person name="Dalla E."/>
            <person name="Dalrymple B.P."/>
            <person name="de Bono B."/>
            <person name="Della Gatta G."/>
            <person name="di Bernardo D."/>
            <person name="Down T."/>
            <person name="Engstrom P."/>
            <person name="Fagiolini M."/>
            <person name="Faulkner G."/>
            <person name="Fletcher C.F."/>
            <person name="Fukushima T."/>
            <person name="Furuno M."/>
            <person name="Futaki S."/>
            <person name="Gariboldi M."/>
            <person name="Georgii-Hemming P."/>
            <person name="Gingeras T.R."/>
            <person name="Gojobori T."/>
            <person name="Green R.E."/>
            <person name="Gustincich S."/>
            <person name="Harbers M."/>
            <person name="Hayashi Y."/>
            <person name="Hensch T.K."/>
            <person name="Hirokawa N."/>
            <person name="Hill D."/>
            <person name="Huminiecki L."/>
            <person name="Iacono M."/>
            <person name="Ikeo K."/>
            <person name="Iwama A."/>
            <person name="Ishikawa T."/>
            <person name="Jakt M."/>
            <person name="Kanapin A."/>
            <person name="Katoh M."/>
            <person name="Kawasawa Y."/>
            <person name="Kelso J."/>
            <person name="Kitamura H."/>
            <person name="Kitano H."/>
            <person name="Kollias G."/>
            <person name="Krishnan S.P."/>
            <person name="Kruger A."/>
            <person name="Kummerfeld S.K."/>
            <person name="Kurochkin I.V."/>
            <person name="Lareau L.F."/>
            <person name="Lazarevic D."/>
            <person name="Lipovich L."/>
            <person name="Liu J."/>
            <person name="Liuni S."/>
            <person name="McWilliam S."/>
            <person name="Madan Babu M."/>
            <person name="Madera M."/>
            <person name="Marchionni L."/>
            <person name="Matsuda H."/>
            <person name="Matsuzawa S."/>
            <person name="Miki H."/>
            <person name="Mignone F."/>
            <person name="Miyake S."/>
            <person name="Morris K."/>
            <person name="Mottagui-Tabar S."/>
            <person name="Mulder N."/>
            <person name="Nakano N."/>
            <person name="Nakauchi H."/>
            <person name="Ng P."/>
            <person name="Nilsson R."/>
            <person name="Nishiguchi S."/>
            <person name="Nishikawa S."/>
            <person name="Nori F."/>
            <person name="Ohara O."/>
            <person name="Okazaki Y."/>
            <person name="Orlando V."/>
            <person name="Pang K.C."/>
            <person name="Pavan W.J."/>
            <person name="Pavesi G."/>
            <person name="Pesole G."/>
            <person name="Petrovsky N."/>
            <person name="Piazza S."/>
            <person name="Reed J."/>
            <person name="Reid J.F."/>
            <person name="Ring B.Z."/>
            <person name="Ringwald M."/>
            <person name="Rost B."/>
            <person name="Ruan Y."/>
            <person name="Salzberg S.L."/>
            <person name="Sandelin A."/>
            <person name="Schneider C."/>
            <person name="Schoenbach C."/>
            <person name="Sekiguchi K."/>
            <person name="Semple C.A."/>
            <person name="Seno S."/>
            <person name="Sessa L."/>
            <person name="Sheng Y."/>
            <person name="Shibata Y."/>
            <person name="Shimada H."/>
            <person name="Shimada K."/>
            <person name="Silva D."/>
            <person name="Sinclair B."/>
            <person name="Sperling S."/>
            <person name="Stupka E."/>
            <person name="Sugiura K."/>
            <person name="Sultana R."/>
            <person name="Takenaka Y."/>
            <person name="Taki K."/>
            <person name="Tammoja K."/>
            <person name="Tan S.L."/>
            <person name="Tang S."/>
            <person name="Taylor M.S."/>
            <person name="Tegner J."/>
            <person name="Teichmann S.A."/>
            <person name="Ueda H.R."/>
            <person name="van Nimwegen E."/>
            <person name="Verardo R."/>
            <person name="Wei C.L."/>
            <person name="Yagi K."/>
            <person name="Yamanishi H."/>
            <person name="Zabarovsky E."/>
            <person name="Zhu S."/>
            <person name="Zimmer A."/>
            <person name="Hide W."/>
            <person name="Bult C."/>
            <person name="Grimmond S.M."/>
            <person name="Teasdale R.D."/>
            <person name="Liu E.T."/>
            <person name="Brusic V."/>
            <person name="Quackenbush J."/>
            <person name="Wahlestedt C."/>
            <person name="Mattick J.S."/>
            <person name="Hume D.A."/>
            <person name="Kai C."/>
            <person name="Sasaki D."/>
            <person name="Tomaru Y."/>
            <person name="Fukuda S."/>
            <person name="Kanamori-Katayama M."/>
            <person name="Suzuki M."/>
            <person name="Aoki J."/>
            <person name="Arakawa T."/>
            <person name="Iida J."/>
            <person name="Imamura K."/>
            <person name="Itoh M."/>
            <person name="Kato T."/>
            <person name="Kawaji H."/>
            <person name="Kawagashira N."/>
            <person name="Kawashima T."/>
            <person name="Kojima M."/>
            <person name="Kondo S."/>
            <person name="Konno H."/>
            <person name="Nakano K."/>
            <person name="Ninomiya N."/>
            <person name="Nishio T."/>
            <person name="Okada M."/>
            <person name="Plessy C."/>
            <person name="Shibata K."/>
            <person name="Shiraki T."/>
            <person name="Suzuki S."/>
            <person name="Tagami M."/>
            <person name="Waki K."/>
            <person name="Watahiki A."/>
            <person name="Okamura-Oho Y."/>
            <person name="Suzuki H."/>
            <person name="Kawai J."/>
            <person name="Hayashizaki Y."/>
        </authorList>
    </citation>
    <scope>NUCLEOTIDE SEQUENCE [LARGE SCALE MRNA]</scope>
    <source>
        <strain>C57BL/6J</strain>
        <tissue>Embryo</tissue>
        <tissue>Hypothalamus</tissue>
    </source>
</reference>
<reference key="2">
    <citation type="journal article" date="2010" name="Cell">
        <title>A tissue-specific atlas of mouse protein phosphorylation and expression.</title>
        <authorList>
            <person name="Huttlin E.L."/>
            <person name="Jedrychowski M.P."/>
            <person name="Elias J.E."/>
            <person name="Goswami T."/>
            <person name="Rad R."/>
            <person name="Beausoleil S.A."/>
            <person name="Villen J."/>
            <person name="Haas W."/>
            <person name="Sowa M.E."/>
            <person name="Gygi S.P."/>
        </authorList>
    </citation>
    <scope>IDENTIFICATION BY MASS SPECTROMETRY [LARGE SCALE ANALYSIS]</scope>
    <source>
        <tissue>Brain</tissue>
    </source>
</reference>
<reference key="3">
    <citation type="journal article" date="2012" name="Biochem. Biophys. Res. Commun.">
        <title>Cloning, tissue distribution and sub-cellular localisation of phospholipase C X-domain containing protein (PLCXD) isoforms.</title>
        <authorList>
            <person name="Gellatly S.A."/>
            <person name="Kalujnaia S."/>
            <person name="Cramb G."/>
        </authorList>
    </citation>
    <scope>TISSUE SPECIFICITY</scope>
</reference>